<protein>
    <recommendedName>
        <fullName evidence="1">Ribosomal protein L11 methyltransferase</fullName>
        <shortName evidence="1">L11 Mtase</shortName>
        <ecNumber evidence="1">2.1.1.-</ecNumber>
    </recommendedName>
</protein>
<dbReference type="EC" id="2.1.1.-" evidence="1"/>
<dbReference type="EMBL" id="CU928160">
    <property type="protein sequence ID" value="CAR00216.1"/>
    <property type="molecule type" value="Genomic_DNA"/>
</dbReference>
<dbReference type="RefSeq" id="WP_001145817.1">
    <property type="nucleotide sequence ID" value="NC_011741.1"/>
</dbReference>
<dbReference type="SMR" id="B7M0X1"/>
<dbReference type="KEGG" id="ecr:ECIAI1_3402"/>
<dbReference type="HOGENOM" id="CLU_049382_4_1_6"/>
<dbReference type="GO" id="GO:0005829">
    <property type="term" value="C:cytosol"/>
    <property type="evidence" value="ECO:0007669"/>
    <property type="project" value="TreeGrafter"/>
</dbReference>
<dbReference type="GO" id="GO:0016279">
    <property type="term" value="F:protein-lysine N-methyltransferase activity"/>
    <property type="evidence" value="ECO:0007669"/>
    <property type="project" value="TreeGrafter"/>
</dbReference>
<dbReference type="GO" id="GO:0032259">
    <property type="term" value="P:methylation"/>
    <property type="evidence" value="ECO:0007669"/>
    <property type="project" value="UniProtKB-KW"/>
</dbReference>
<dbReference type="CDD" id="cd02440">
    <property type="entry name" value="AdoMet_MTases"/>
    <property type="match status" value="1"/>
</dbReference>
<dbReference type="FunFam" id="3.40.50.150:FF:000021">
    <property type="entry name" value="Ribosomal protein L11 methyltransferase"/>
    <property type="match status" value="1"/>
</dbReference>
<dbReference type="Gene3D" id="3.40.50.150">
    <property type="entry name" value="Vaccinia Virus protein VP39"/>
    <property type="match status" value="1"/>
</dbReference>
<dbReference type="HAMAP" id="MF_00735">
    <property type="entry name" value="Methyltr_PrmA"/>
    <property type="match status" value="1"/>
</dbReference>
<dbReference type="InterPro" id="IPR050078">
    <property type="entry name" value="Ribosomal_L11_MeTrfase_PrmA"/>
</dbReference>
<dbReference type="InterPro" id="IPR004498">
    <property type="entry name" value="Ribosomal_PrmA_MeTrfase"/>
</dbReference>
<dbReference type="InterPro" id="IPR029063">
    <property type="entry name" value="SAM-dependent_MTases_sf"/>
</dbReference>
<dbReference type="NCBIfam" id="TIGR00406">
    <property type="entry name" value="prmA"/>
    <property type="match status" value="1"/>
</dbReference>
<dbReference type="PANTHER" id="PTHR43648">
    <property type="entry name" value="ELECTRON TRANSFER FLAVOPROTEIN BETA SUBUNIT LYSINE METHYLTRANSFERASE"/>
    <property type="match status" value="1"/>
</dbReference>
<dbReference type="PANTHER" id="PTHR43648:SF1">
    <property type="entry name" value="ELECTRON TRANSFER FLAVOPROTEIN BETA SUBUNIT LYSINE METHYLTRANSFERASE"/>
    <property type="match status" value="1"/>
</dbReference>
<dbReference type="Pfam" id="PF06325">
    <property type="entry name" value="PrmA"/>
    <property type="match status" value="1"/>
</dbReference>
<dbReference type="PIRSF" id="PIRSF000401">
    <property type="entry name" value="RPL11_MTase"/>
    <property type="match status" value="1"/>
</dbReference>
<dbReference type="SUPFAM" id="SSF53335">
    <property type="entry name" value="S-adenosyl-L-methionine-dependent methyltransferases"/>
    <property type="match status" value="1"/>
</dbReference>
<name>PRMA_ECO8A</name>
<comment type="function">
    <text evidence="1">Methylates ribosomal protein L11.</text>
</comment>
<comment type="catalytic activity">
    <reaction evidence="1">
        <text>L-lysyl-[protein] + 3 S-adenosyl-L-methionine = N(6),N(6),N(6)-trimethyl-L-lysyl-[protein] + 3 S-adenosyl-L-homocysteine + 3 H(+)</text>
        <dbReference type="Rhea" id="RHEA:54192"/>
        <dbReference type="Rhea" id="RHEA-COMP:9752"/>
        <dbReference type="Rhea" id="RHEA-COMP:13826"/>
        <dbReference type="ChEBI" id="CHEBI:15378"/>
        <dbReference type="ChEBI" id="CHEBI:29969"/>
        <dbReference type="ChEBI" id="CHEBI:57856"/>
        <dbReference type="ChEBI" id="CHEBI:59789"/>
        <dbReference type="ChEBI" id="CHEBI:61961"/>
    </reaction>
</comment>
<comment type="subcellular location">
    <subcellularLocation>
        <location evidence="1">Cytoplasm</location>
    </subcellularLocation>
</comment>
<comment type="similarity">
    <text evidence="1">Belongs to the methyltransferase superfamily. PrmA family.</text>
</comment>
<organism>
    <name type="scientific">Escherichia coli O8 (strain IAI1)</name>
    <dbReference type="NCBI Taxonomy" id="585034"/>
    <lineage>
        <taxon>Bacteria</taxon>
        <taxon>Pseudomonadati</taxon>
        <taxon>Pseudomonadota</taxon>
        <taxon>Gammaproteobacteria</taxon>
        <taxon>Enterobacterales</taxon>
        <taxon>Enterobacteriaceae</taxon>
        <taxon>Escherichia</taxon>
    </lineage>
</organism>
<evidence type="ECO:0000255" key="1">
    <source>
        <dbReference type="HAMAP-Rule" id="MF_00735"/>
    </source>
</evidence>
<accession>B7M0X1</accession>
<proteinExistence type="inferred from homology"/>
<feature type="chain" id="PRO_1000192629" description="Ribosomal protein L11 methyltransferase">
    <location>
        <begin position="1"/>
        <end position="293"/>
    </location>
</feature>
<feature type="binding site" evidence="1">
    <location>
        <position position="145"/>
    </location>
    <ligand>
        <name>S-adenosyl-L-methionine</name>
        <dbReference type="ChEBI" id="CHEBI:59789"/>
    </ligand>
</feature>
<feature type="binding site" evidence="1">
    <location>
        <position position="166"/>
    </location>
    <ligand>
        <name>S-adenosyl-L-methionine</name>
        <dbReference type="ChEBI" id="CHEBI:59789"/>
    </ligand>
</feature>
<feature type="binding site" evidence="1">
    <location>
        <position position="188"/>
    </location>
    <ligand>
        <name>S-adenosyl-L-methionine</name>
        <dbReference type="ChEBI" id="CHEBI:59789"/>
    </ligand>
</feature>
<feature type="binding site" evidence="1">
    <location>
        <position position="230"/>
    </location>
    <ligand>
        <name>S-adenosyl-L-methionine</name>
        <dbReference type="ChEBI" id="CHEBI:59789"/>
    </ligand>
</feature>
<reference key="1">
    <citation type="journal article" date="2009" name="PLoS Genet.">
        <title>Organised genome dynamics in the Escherichia coli species results in highly diverse adaptive paths.</title>
        <authorList>
            <person name="Touchon M."/>
            <person name="Hoede C."/>
            <person name="Tenaillon O."/>
            <person name="Barbe V."/>
            <person name="Baeriswyl S."/>
            <person name="Bidet P."/>
            <person name="Bingen E."/>
            <person name="Bonacorsi S."/>
            <person name="Bouchier C."/>
            <person name="Bouvet O."/>
            <person name="Calteau A."/>
            <person name="Chiapello H."/>
            <person name="Clermont O."/>
            <person name="Cruveiller S."/>
            <person name="Danchin A."/>
            <person name="Diard M."/>
            <person name="Dossat C."/>
            <person name="Karoui M.E."/>
            <person name="Frapy E."/>
            <person name="Garry L."/>
            <person name="Ghigo J.M."/>
            <person name="Gilles A.M."/>
            <person name="Johnson J."/>
            <person name="Le Bouguenec C."/>
            <person name="Lescat M."/>
            <person name="Mangenot S."/>
            <person name="Martinez-Jehanne V."/>
            <person name="Matic I."/>
            <person name="Nassif X."/>
            <person name="Oztas S."/>
            <person name="Petit M.A."/>
            <person name="Pichon C."/>
            <person name="Rouy Z."/>
            <person name="Ruf C.S."/>
            <person name="Schneider D."/>
            <person name="Tourret J."/>
            <person name="Vacherie B."/>
            <person name="Vallenet D."/>
            <person name="Medigue C."/>
            <person name="Rocha E.P.C."/>
            <person name="Denamur E."/>
        </authorList>
    </citation>
    <scope>NUCLEOTIDE SEQUENCE [LARGE SCALE GENOMIC DNA]</scope>
    <source>
        <strain>IAI1</strain>
    </source>
</reference>
<keyword id="KW-0963">Cytoplasm</keyword>
<keyword id="KW-0489">Methyltransferase</keyword>
<keyword id="KW-0949">S-adenosyl-L-methionine</keyword>
<keyword id="KW-0808">Transferase</keyword>
<gene>
    <name evidence="1" type="primary">prmA</name>
    <name type="ordered locus">ECIAI1_3402</name>
</gene>
<sequence>MPWIQLKLNTTGANAEDLSDALMEAGAVSITFQDTHDTPVFEPLPGETRLWGDTDVIGLFDAETDMNDVVAILENHPLLGAGFAHKIEQLEDKDWEREWMDNFHPMRFGERLWICPSWRDVPDENAVNVMLDPGLAFGTGTHPTTSLCLQWLDSLDLTDKTVIDFGCGSGILAIAALKLGAAKAIGIDIDPQAIQASRDNAERNGVSDRLELYLPKDQPEEMKADVVVANILAGPLRELAPLISVLPVSGGLLGLSGILASQAESVCEAYADSFALDPVVEKEEWCRITGRKN</sequence>